<organism>
    <name type="scientific">Buchnera aphidicola subsp. Schizaphis graminum (strain Sg)</name>
    <dbReference type="NCBI Taxonomy" id="198804"/>
    <lineage>
        <taxon>Bacteria</taxon>
        <taxon>Pseudomonadati</taxon>
        <taxon>Pseudomonadota</taxon>
        <taxon>Gammaproteobacteria</taxon>
        <taxon>Enterobacterales</taxon>
        <taxon>Erwiniaceae</taxon>
        <taxon>Buchnera</taxon>
    </lineage>
</organism>
<comment type="function">
    <text evidence="1">Catalyzes the ATP-dependent phosphorylation of L-homoserine to L-homoserine phosphate.</text>
</comment>
<comment type="catalytic activity">
    <reaction evidence="1">
        <text>L-homoserine + ATP = O-phospho-L-homoserine + ADP + H(+)</text>
        <dbReference type="Rhea" id="RHEA:13985"/>
        <dbReference type="ChEBI" id="CHEBI:15378"/>
        <dbReference type="ChEBI" id="CHEBI:30616"/>
        <dbReference type="ChEBI" id="CHEBI:57476"/>
        <dbReference type="ChEBI" id="CHEBI:57590"/>
        <dbReference type="ChEBI" id="CHEBI:456216"/>
        <dbReference type="EC" id="2.7.1.39"/>
    </reaction>
</comment>
<comment type="pathway">
    <text evidence="1">Amino-acid biosynthesis; L-threonine biosynthesis; L-threonine from L-aspartate: step 4/5.</text>
</comment>
<comment type="subcellular location">
    <subcellularLocation>
        <location evidence="1">Cytoplasm</location>
    </subcellularLocation>
</comment>
<comment type="similarity">
    <text evidence="1">Belongs to the GHMP kinase family. Homoserine kinase subfamily.</text>
</comment>
<sequence length="309" mass="34036">MIKIYAPASVANVGVGFDILGAAIIPINGTLLGDCVTVKLSKKFELINKGIFSNKLPINKEQNIVWKCWFKFCKVIKKNIPVSIILEKNMPIGSGLGSSACSVVATLVAINQICNNPLNSKELLLLMGEIEGEISGSIHYDNVAPSYLGGLQLILEDSDIISQKIPNFKHWFWIIAWPGIKVSTAEARKILPKEYKKDICIKNSRYLAGFIHASYTKQSHLAARCMQDFIAEPYRSKLLPNFLNAKEKIKKIGAISCGISGSGPTIFAISDKIKTAEKISLWLKNNYLQNKTGFVHICAVDVKGVRKIG</sequence>
<dbReference type="EC" id="2.7.1.39" evidence="1"/>
<dbReference type="EMBL" id="AE013218">
    <property type="protein sequence ID" value="AAM67752.1"/>
    <property type="molecule type" value="Genomic_DNA"/>
</dbReference>
<dbReference type="RefSeq" id="WP_011053719.1">
    <property type="nucleotide sequence ID" value="NC_004061.1"/>
</dbReference>
<dbReference type="SMR" id="Q8K9V0"/>
<dbReference type="STRING" id="198804.BUsg_187"/>
<dbReference type="GeneID" id="93003655"/>
<dbReference type="KEGG" id="bas:BUsg_187"/>
<dbReference type="eggNOG" id="COG0083">
    <property type="taxonomic scope" value="Bacteria"/>
</dbReference>
<dbReference type="HOGENOM" id="CLU_041243_1_1_6"/>
<dbReference type="UniPathway" id="UPA00050">
    <property type="reaction ID" value="UER00064"/>
</dbReference>
<dbReference type="Proteomes" id="UP000000416">
    <property type="component" value="Chromosome"/>
</dbReference>
<dbReference type="GO" id="GO:0005737">
    <property type="term" value="C:cytoplasm"/>
    <property type="evidence" value="ECO:0007669"/>
    <property type="project" value="UniProtKB-SubCell"/>
</dbReference>
<dbReference type="GO" id="GO:0005524">
    <property type="term" value="F:ATP binding"/>
    <property type="evidence" value="ECO:0007669"/>
    <property type="project" value="UniProtKB-UniRule"/>
</dbReference>
<dbReference type="GO" id="GO:0004413">
    <property type="term" value="F:homoserine kinase activity"/>
    <property type="evidence" value="ECO:0007669"/>
    <property type="project" value="UniProtKB-UniRule"/>
</dbReference>
<dbReference type="GO" id="GO:0009088">
    <property type="term" value="P:threonine biosynthetic process"/>
    <property type="evidence" value="ECO:0007669"/>
    <property type="project" value="UniProtKB-UniRule"/>
</dbReference>
<dbReference type="Gene3D" id="3.30.230.10">
    <property type="match status" value="1"/>
</dbReference>
<dbReference type="Gene3D" id="3.30.70.890">
    <property type="entry name" value="GHMP kinase, C-terminal domain"/>
    <property type="match status" value="1"/>
</dbReference>
<dbReference type="HAMAP" id="MF_00384">
    <property type="entry name" value="Homoser_kinase"/>
    <property type="match status" value="1"/>
</dbReference>
<dbReference type="InterPro" id="IPR013750">
    <property type="entry name" value="GHMP_kinase_C_dom"/>
</dbReference>
<dbReference type="InterPro" id="IPR036554">
    <property type="entry name" value="GHMP_kinase_C_sf"/>
</dbReference>
<dbReference type="InterPro" id="IPR006204">
    <property type="entry name" value="GHMP_kinase_N_dom"/>
</dbReference>
<dbReference type="InterPro" id="IPR006203">
    <property type="entry name" value="GHMP_knse_ATP-bd_CS"/>
</dbReference>
<dbReference type="InterPro" id="IPR000870">
    <property type="entry name" value="Homoserine_kinase"/>
</dbReference>
<dbReference type="InterPro" id="IPR020568">
    <property type="entry name" value="Ribosomal_Su5_D2-typ_SF"/>
</dbReference>
<dbReference type="InterPro" id="IPR014721">
    <property type="entry name" value="Ribsml_uS5_D2-typ_fold_subgr"/>
</dbReference>
<dbReference type="NCBIfam" id="NF002288">
    <property type="entry name" value="PRK01212.1-4"/>
    <property type="match status" value="1"/>
</dbReference>
<dbReference type="NCBIfam" id="TIGR00191">
    <property type="entry name" value="thrB"/>
    <property type="match status" value="1"/>
</dbReference>
<dbReference type="PANTHER" id="PTHR20861:SF1">
    <property type="entry name" value="HOMOSERINE KINASE"/>
    <property type="match status" value="1"/>
</dbReference>
<dbReference type="PANTHER" id="PTHR20861">
    <property type="entry name" value="HOMOSERINE/4-DIPHOSPHOCYTIDYL-2-C-METHYL-D-ERYTHRITOL KINASE"/>
    <property type="match status" value="1"/>
</dbReference>
<dbReference type="Pfam" id="PF08544">
    <property type="entry name" value="GHMP_kinases_C"/>
    <property type="match status" value="1"/>
</dbReference>
<dbReference type="Pfam" id="PF00288">
    <property type="entry name" value="GHMP_kinases_N"/>
    <property type="match status" value="1"/>
</dbReference>
<dbReference type="PIRSF" id="PIRSF000676">
    <property type="entry name" value="Homoser_kin"/>
    <property type="match status" value="1"/>
</dbReference>
<dbReference type="PRINTS" id="PR00958">
    <property type="entry name" value="HOMSERKINASE"/>
</dbReference>
<dbReference type="SUPFAM" id="SSF55060">
    <property type="entry name" value="GHMP Kinase, C-terminal domain"/>
    <property type="match status" value="1"/>
</dbReference>
<dbReference type="SUPFAM" id="SSF54211">
    <property type="entry name" value="Ribosomal protein S5 domain 2-like"/>
    <property type="match status" value="1"/>
</dbReference>
<dbReference type="PROSITE" id="PS00627">
    <property type="entry name" value="GHMP_KINASES_ATP"/>
    <property type="match status" value="1"/>
</dbReference>
<feature type="chain" id="PRO_0000156556" description="Homoserine kinase">
    <location>
        <begin position="1"/>
        <end position="309"/>
    </location>
</feature>
<feature type="binding site" evidence="1">
    <location>
        <begin position="91"/>
        <end position="101"/>
    </location>
    <ligand>
        <name>ATP</name>
        <dbReference type="ChEBI" id="CHEBI:30616"/>
    </ligand>
</feature>
<reference key="1">
    <citation type="journal article" date="2002" name="Science">
        <title>50 million years of genomic stasis in endosymbiotic bacteria.</title>
        <authorList>
            <person name="Tamas I."/>
            <person name="Klasson L."/>
            <person name="Canbaeck B."/>
            <person name="Naeslund A.K."/>
            <person name="Eriksson A.-S."/>
            <person name="Wernegreen J.J."/>
            <person name="Sandstroem J.P."/>
            <person name="Moran N.A."/>
            <person name="Andersson S.G.E."/>
        </authorList>
    </citation>
    <scope>NUCLEOTIDE SEQUENCE [LARGE SCALE GENOMIC DNA]</scope>
    <source>
        <strain>Sg</strain>
    </source>
</reference>
<accession>Q8K9V0</accession>
<proteinExistence type="inferred from homology"/>
<name>KHSE_BUCAP</name>
<evidence type="ECO:0000255" key="1">
    <source>
        <dbReference type="HAMAP-Rule" id="MF_00384"/>
    </source>
</evidence>
<protein>
    <recommendedName>
        <fullName evidence="1">Homoserine kinase</fullName>
        <shortName evidence="1">HK</shortName>
        <shortName evidence="1">HSK</shortName>
        <ecNumber evidence="1">2.7.1.39</ecNumber>
    </recommendedName>
</protein>
<keyword id="KW-0028">Amino-acid biosynthesis</keyword>
<keyword id="KW-0067">ATP-binding</keyword>
<keyword id="KW-0963">Cytoplasm</keyword>
<keyword id="KW-0418">Kinase</keyword>
<keyword id="KW-0547">Nucleotide-binding</keyword>
<keyword id="KW-0791">Threonine biosynthesis</keyword>
<keyword id="KW-0808">Transferase</keyword>
<gene>
    <name evidence="1" type="primary">thrB</name>
    <name type="ordered locus">BUsg_187</name>
</gene>